<sequence length="79" mass="9356">MEFPKAVIKRPNYHFEYPHKRKYKRIGRGFSVGELEKAGLNINKARKLGIFVDIRRKSVHEENVETLKKFSEQLSNQKP</sequence>
<proteinExistence type="inferred from homology"/>
<name>RL13E_SACS2</name>
<reference key="1">
    <citation type="journal article" date="2001" name="Proc. Natl. Acad. Sci. U.S.A.">
        <title>The complete genome of the crenarchaeon Sulfolobus solfataricus P2.</title>
        <authorList>
            <person name="She Q."/>
            <person name="Singh R.K."/>
            <person name="Confalonieri F."/>
            <person name="Zivanovic Y."/>
            <person name="Allard G."/>
            <person name="Awayez M.J."/>
            <person name="Chan-Weiher C.C.-Y."/>
            <person name="Clausen I.G."/>
            <person name="Curtis B.A."/>
            <person name="De Moors A."/>
            <person name="Erauso G."/>
            <person name="Fletcher C."/>
            <person name="Gordon P.M.K."/>
            <person name="Heikamp-de Jong I."/>
            <person name="Jeffries A.C."/>
            <person name="Kozera C.J."/>
            <person name="Medina N."/>
            <person name="Peng X."/>
            <person name="Thi-Ngoc H.P."/>
            <person name="Redder P."/>
            <person name="Schenk M.E."/>
            <person name="Theriault C."/>
            <person name="Tolstrup N."/>
            <person name="Charlebois R.L."/>
            <person name="Doolittle W.F."/>
            <person name="Duguet M."/>
            <person name="Gaasterland T."/>
            <person name="Garrett R.A."/>
            <person name="Ragan M.A."/>
            <person name="Sensen C.W."/>
            <person name="Van der Oost J."/>
        </authorList>
    </citation>
    <scope>NUCLEOTIDE SEQUENCE [LARGE SCALE GENOMIC DNA]</scope>
    <source>
        <strain>ATCC 35092 / DSM 1617 / JCM 11322 / P2</strain>
    </source>
</reference>
<dbReference type="EMBL" id="AE006641">
    <property type="protein sequence ID" value="AAK42585.1"/>
    <property type="status" value="ALT_INIT"/>
    <property type="molecule type" value="Genomic_DNA"/>
</dbReference>
<dbReference type="PIR" id="B90416">
    <property type="entry name" value="B90416"/>
</dbReference>
<dbReference type="RefSeq" id="WP_009993130.1">
    <property type="nucleotide sequence ID" value="NC_002754.1"/>
</dbReference>
<dbReference type="SMR" id="Q97W05"/>
<dbReference type="FunCoup" id="Q97W05">
    <property type="interactions" value="64"/>
</dbReference>
<dbReference type="STRING" id="273057.SSO2442"/>
<dbReference type="PaxDb" id="273057-SSO2442"/>
<dbReference type="EnsemblBacteria" id="AAK42585">
    <property type="protein sequence ID" value="AAK42585"/>
    <property type="gene ID" value="SSO2442"/>
</dbReference>
<dbReference type="KEGG" id="sso:SSO2442"/>
<dbReference type="PATRIC" id="fig|273057.12.peg.2523"/>
<dbReference type="eggNOG" id="arCOG01013">
    <property type="taxonomic scope" value="Archaea"/>
</dbReference>
<dbReference type="HOGENOM" id="CLU_2165378_0_0_2"/>
<dbReference type="InParanoid" id="Q97W05"/>
<dbReference type="PhylomeDB" id="Q97W05"/>
<dbReference type="Proteomes" id="UP000001974">
    <property type="component" value="Chromosome"/>
</dbReference>
<dbReference type="GO" id="GO:1990904">
    <property type="term" value="C:ribonucleoprotein complex"/>
    <property type="evidence" value="ECO:0007669"/>
    <property type="project" value="UniProtKB-KW"/>
</dbReference>
<dbReference type="GO" id="GO:0005840">
    <property type="term" value="C:ribosome"/>
    <property type="evidence" value="ECO:0007669"/>
    <property type="project" value="UniProtKB-KW"/>
</dbReference>
<dbReference type="GO" id="GO:0003735">
    <property type="term" value="F:structural constituent of ribosome"/>
    <property type="evidence" value="ECO:0007669"/>
    <property type="project" value="InterPro"/>
</dbReference>
<dbReference type="GO" id="GO:0006412">
    <property type="term" value="P:translation"/>
    <property type="evidence" value="ECO:0007669"/>
    <property type="project" value="UniProtKB-UniRule"/>
</dbReference>
<dbReference type="HAMAP" id="MF_00499">
    <property type="entry name" value="Ribosomal_eL13"/>
    <property type="match status" value="1"/>
</dbReference>
<dbReference type="InterPro" id="IPR001380">
    <property type="entry name" value="Ribosomal_eL13"/>
</dbReference>
<dbReference type="InterPro" id="IPR018256">
    <property type="entry name" value="Ribosomal_eL13_CS"/>
</dbReference>
<dbReference type="NCBIfam" id="NF008914">
    <property type="entry name" value="PRK12277.1"/>
    <property type="match status" value="1"/>
</dbReference>
<dbReference type="Pfam" id="PF01294">
    <property type="entry name" value="Ribosomal_L13e"/>
    <property type="match status" value="1"/>
</dbReference>
<dbReference type="PROSITE" id="PS01104">
    <property type="entry name" value="RIBOSOMAL_L13E"/>
    <property type="match status" value="1"/>
</dbReference>
<feature type="chain" id="PRO_0000192941" description="Large ribosomal subunit protein eL13">
    <location>
        <begin position="1"/>
        <end position="79"/>
    </location>
</feature>
<comment type="similarity">
    <text evidence="1">Belongs to the eukaryotic ribosomal protein eL13 family.</text>
</comment>
<comment type="sequence caution" evidence="2">
    <conflict type="erroneous initiation">
        <sequence resource="EMBL-CDS" id="AAK42585"/>
    </conflict>
</comment>
<protein>
    <recommendedName>
        <fullName evidence="1">Large ribosomal subunit protein eL13</fullName>
    </recommendedName>
    <alternativeName>
        <fullName evidence="2">50S ribosomal protein L13e</fullName>
    </alternativeName>
</protein>
<keyword id="KW-1185">Reference proteome</keyword>
<keyword id="KW-0687">Ribonucleoprotein</keyword>
<keyword id="KW-0689">Ribosomal protein</keyword>
<organism>
    <name type="scientific">Saccharolobus solfataricus (strain ATCC 35092 / DSM 1617 / JCM 11322 / P2)</name>
    <name type="common">Sulfolobus solfataricus</name>
    <dbReference type="NCBI Taxonomy" id="273057"/>
    <lineage>
        <taxon>Archaea</taxon>
        <taxon>Thermoproteota</taxon>
        <taxon>Thermoprotei</taxon>
        <taxon>Sulfolobales</taxon>
        <taxon>Sulfolobaceae</taxon>
        <taxon>Saccharolobus</taxon>
    </lineage>
</organism>
<accession>Q97W05</accession>
<gene>
    <name evidence="1" type="primary">rpl13e</name>
    <name type="ordered locus">SSO2442</name>
</gene>
<evidence type="ECO:0000255" key="1">
    <source>
        <dbReference type="HAMAP-Rule" id="MF_00499"/>
    </source>
</evidence>
<evidence type="ECO:0000305" key="2"/>